<gene>
    <name evidence="1" type="primary">pheS</name>
    <name type="ordered locus">PA14_28690</name>
</gene>
<accession>Q02NN7</accession>
<comment type="catalytic activity">
    <reaction evidence="1">
        <text>tRNA(Phe) + L-phenylalanine + ATP = L-phenylalanyl-tRNA(Phe) + AMP + diphosphate + H(+)</text>
        <dbReference type="Rhea" id="RHEA:19413"/>
        <dbReference type="Rhea" id="RHEA-COMP:9668"/>
        <dbReference type="Rhea" id="RHEA-COMP:9699"/>
        <dbReference type="ChEBI" id="CHEBI:15378"/>
        <dbReference type="ChEBI" id="CHEBI:30616"/>
        <dbReference type="ChEBI" id="CHEBI:33019"/>
        <dbReference type="ChEBI" id="CHEBI:58095"/>
        <dbReference type="ChEBI" id="CHEBI:78442"/>
        <dbReference type="ChEBI" id="CHEBI:78531"/>
        <dbReference type="ChEBI" id="CHEBI:456215"/>
        <dbReference type="EC" id="6.1.1.20"/>
    </reaction>
</comment>
<comment type="cofactor">
    <cofactor evidence="1">
        <name>Mg(2+)</name>
        <dbReference type="ChEBI" id="CHEBI:18420"/>
    </cofactor>
    <text evidence="1">Binds 2 magnesium ions per tetramer.</text>
</comment>
<comment type="subunit">
    <text evidence="1">Tetramer of two alpha and two beta subunits.</text>
</comment>
<comment type="subcellular location">
    <subcellularLocation>
        <location evidence="1">Cytoplasm</location>
    </subcellularLocation>
</comment>
<comment type="similarity">
    <text evidence="1">Belongs to the class-II aminoacyl-tRNA synthetase family. Phe-tRNA synthetase alpha subunit type 1 subfamily.</text>
</comment>
<name>SYFA_PSEAB</name>
<sequence length="338" mass="38035">MENLDALVSQALEAVRHTEDVNALEQIRVHYLGKKGELTQVMKTLGDLPAEERPKVGALINVAKEKVQDALNARKTELEGAALAARLAAERIDVTLPGRGQLSGGLHPVTRTLERIEQCFSRIGYEVAEGPEVEDDYHNFEALNIPGHHPARAMHDTFYFNANMLLRTHTSPVQVRTMESQQPPIRIVCPGRVYRCDSDLTHSPMFHQVEGLLVDEGVSFADLKGTIEEFLRAFFEKQLEVRFRPSFFPFTEPSAEVDIQCVICSGNGCRVCKQTGWLEVMGCGMVHPNVLRMSNIDPEKFQGFAFGMGAERLAMLRYGVNDLRLFFDNDLRFLGQFR</sequence>
<dbReference type="EC" id="6.1.1.20" evidence="1"/>
<dbReference type="EMBL" id="CP000438">
    <property type="protein sequence ID" value="ABJ11966.1"/>
    <property type="molecule type" value="Genomic_DNA"/>
</dbReference>
<dbReference type="RefSeq" id="WP_003090666.1">
    <property type="nucleotide sequence ID" value="NZ_CP034244.1"/>
</dbReference>
<dbReference type="SMR" id="Q02NN7"/>
<dbReference type="KEGG" id="pau:PA14_28690"/>
<dbReference type="PseudoCAP" id="PA14_28690"/>
<dbReference type="HOGENOM" id="CLU_025086_0_1_6"/>
<dbReference type="BioCyc" id="PAER208963:G1G74-2400-MONOMER"/>
<dbReference type="Proteomes" id="UP000000653">
    <property type="component" value="Chromosome"/>
</dbReference>
<dbReference type="GO" id="GO:0005737">
    <property type="term" value="C:cytoplasm"/>
    <property type="evidence" value="ECO:0007669"/>
    <property type="project" value="UniProtKB-SubCell"/>
</dbReference>
<dbReference type="GO" id="GO:0005524">
    <property type="term" value="F:ATP binding"/>
    <property type="evidence" value="ECO:0007669"/>
    <property type="project" value="UniProtKB-UniRule"/>
</dbReference>
<dbReference type="GO" id="GO:0000287">
    <property type="term" value="F:magnesium ion binding"/>
    <property type="evidence" value="ECO:0007669"/>
    <property type="project" value="UniProtKB-UniRule"/>
</dbReference>
<dbReference type="GO" id="GO:0004826">
    <property type="term" value="F:phenylalanine-tRNA ligase activity"/>
    <property type="evidence" value="ECO:0007669"/>
    <property type="project" value="UniProtKB-UniRule"/>
</dbReference>
<dbReference type="GO" id="GO:0000049">
    <property type="term" value="F:tRNA binding"/>
    <property type="evidence" value="ECO:0007669"/>
    <property type="project" value="InterPro"/>
</dbReference>
<dbReference type="GO" id="GO:0006432">
    <property type="term" value="P:phenylalanyl-tRNA aminoacylation"/>
    <property type="evidence" value="ECO:0007669"/>
    <property type="project" value="UniProtKB-UniRule"/>
</dbReference>
<dbReference type="CDD" id="cd00496">
    <property type="entry name" value="PheRS_alpha_core"/>
    <property type="match status" value="1"/>
</dbReference>
<dbReference type="FunFam" id="3.30.930.10:FF:000003">
    <property type="entry name" value="Phenylalanine--tRNA ligase alpha subunit"/>
    <property type="match status" value="1"/>
</dbReference>
<dbReference type="Gene3D" id="3.30.930.10">
    <property type="entry name" value="Bira Bifunctional Protein, Domain 2"/>
    <property type="match status" value="1"/>
</dbReference>
<dbReference type="HAMAP" id="MF_00281">
    <property type="entry name" value="Phe_tRNA_synth_alpha1"/>
    <property type="match status" value="1"/>
</dbReference>
<dbReference type="InterPro" id="IPR006195">
    <property type="entry name" value="aa-tRNA-synth_II"/>
</dbReference>
<dbReference type="InterPro" id="IPR045864">
    <property type="entry name" value="aa-tRNA-synth_II/BPL/LPL"/>
</dbReference>
<dbReference type="InterPro" id="IPR004529">
    <property type="entry name" value="Phe-tRNA-synth_IIc_asu"/>
</dbReference>
<dbReference type="InterPro" id="IPR004188">
    <property type="entry name" value="Phe-tRNA_ligase_II_N"/>
</dbReference>
<dbReference type="InterPro" id="IPR022911">
    <property type="entry name" value="Phe_tRNA_ligase_alpha1_bac"/>
</dbReference>
<dbReference type="InterPro" id="IPR002319">
    <property type="entry name" value="Phenylalanyl-tRNA_Synthase"/>
</dbReference>
<dbReference type="InterPro" id="IPR010978">
    <property type="entry name" value="tRNA-bd_arm"/>
</dbReference>
<dbReference type="NCBIfam" id="TIGR00468">
    <property type="entry name" value="pheS"/>
    <property type="match status" value="1"/>
</dbReference>
<dbReference type="PANTHER" id="PTHR11538:SF41">
    <property type="entry name" value="PHENYLALANINE--TRNA LIGASE, MITOCHONDRIAL"/>
    <property type="match status" value="1"/>
</dbReference>
<dbReference type="PANTHER" id="PTHR11538">
    <property type="entry name" value="PHENYLALANYL-TRNA SYNTHETASE"/>
    <property type="match status" value="1"/>
</dbReference>
<dbReference type="Pfam" id="PF02912">
    <property type="entry name" value="Phe_tRNA-synt_N"/>
    <property type="match status" value="1"/>
</dbReference>
<dbReference type="Pfam" id="PF01409">
    <property type="entry name" value="tRNA-synt_2d"/>
    <property type="match status" value="1"/>
</dbReference>
<dbReference type="SUPFAM" id="SSF55681">
    <property type="entry name" value="Class II aaRS and biotin synthetases"/>
    <property type="match status" value="1"/>
</dbReference>
<dbReference type="SUPFAM" id="SSF46589">
    <property type="entry name" value="tRNA-binding arm"/>
    <property type="match status" value="1"/>
</dbReference>
<dbReference type="PROSITE" id="PS50862">
    <property type="entry name" value="AA_TRNA_LIGASE_II"/>
    <property type="match status" value="1"/>
</dbReference>
<keyword id="KW-0030">Aminoacyl-tRNA synthetase</keyword>
<keyword id="KW-0067">ATP-binding</keyword>
<keyword id="KW-0963">Cytoplasm</keyword>
<keyword id="KW-0436">Ligase</keyword>
<keyword id="KW-0460">Magnesium</keyword>
<keyword id="KW-0479">Metal-binding</keyword>
<keyword id="KW-0547">Nucleotide-binding</keyword>
<keyword id="KW-0648">Protein biosynthesis</keyword>
<evidence type="ECO:0000255" key="1">
    <source>
        <dbReference type="HAMAP-Rule" id="MF_00281"/>
    </source>
</evidence>
<protein>
    <recommendedName>
        <fullName evidence="1">Phenylalanine--tRNA ligase alpha subunit</fullName>
        <ecNumber evidence="1">6.1.1.20</ecNumber>
    </recommendedName>
    <alternativeName>
        <fullName evidence="1">Phenylalanyl-tRNA synthetase alpha subunit</fullName>
        <shortName evidence="1">PheRS</shortName>
    </alternativeName>
</protein>
<proteinExistence type="inferred from homology"/>
<feature type="chain" id="PRO_1000006874" description="Phenylalanine--tRNA ligase alpha subunit">
    <location>
        <begin position="1"/>
        <end position="338"/>
    </location>
</feature>
<feature type="binding site" evidence="1">
    <location>
        <position position="252"/>
    </location>
    <ligand>
        <name>Mg(2+)</name>
        <dbReference type="ChEBI" id="CHEBI:18420"/>
        <note>shared with beta subunit</note>
    </ligand>
</feature>
<organism>
    <name type="scientific">Pseudomonas aeruginosa (strain UCBPP-PA14)</name>
    <dbReference type="NCBI Taxonomy" id="208963"/>
    <lineage>
        <taxon>Bacteria</taxon>
        <taxon>Pseudomonadati</taxon>
        <taxon>Pseudomonadota</taxon>
        <taxon>Gammaproteobacteria</taxon>
        <taxon>Pseudomonadales</taxon>
        <taxon>Pseudomonadaceae</taxon>
        <taxon>Pseudomonas</taxon>
    </lineage>
</organism>
<reference key="1">
    <citation type="journal article" date="2006" name="Genome Biol.">
        <title>Genomic analysis reveals that Pseudomonas aeruginosa virulence is combinatorial.</title>
        <authorList>
            <person name="Lee D.G."/>
            <person name="Urbach J.M."/>
            <person name="Wu G."/>
            <person name="Liberati N.T."/>
            <person name="Feinbaum R.L."/>
            <person name="Miyata S."/>
            <person name="Diggins L.T."/>
            <person name="He J."/>
            <person name="Saucier M."/>
            <person name="Deziel E."/>
            <person name="Friedman L."/>
            <person name="Li L."/>
            <person name="Grills G."/>
            <person name="Montgomery K."/>
            <person name="Kucherlapati R."/>
            <person name="Rahme L.G."/>
            <person name="Ausubel F.M."/>
        </authorList>
    </citation>
    <scope>NUCLEOTIDE SEQUENCE [LARGE SCALE GENOMIC DNA]</scope>
    <source>
        <strain>UCBPP-PA14</strain>
    </source>
</reference>